<dbReference type="EMBL" id="CR380954">
    <property type="protein sequence ID" value="CAG59977.1"/>
    <property type="molecule type" value="Genomic_DNA"/>
</dbReference>
<dbReference type="RefSeq" id="XP_447044.1">
    <property type="nucleotide sequence ID" value="XM_447044.1"/>
</dbReference>
<dbReference type="SMR" id="Q6FRV0"/>
<dbReference type="FunCoup" id="Q6FRV0">
    <property type="interactions" value="1441"/>
</dbReference>
<dbReference type="STRING" id="284593.Q6FRV0"/>
<dbReference type="EnsemblFungi" id="CAGL0H05709g-T">
    <property type="protein sequence ID" value="CAGL0H05709g-T-p1"/>
    <property type="gene ID" value="CAGL0H05709g"/>
</dbReference>
<dbReference type="KEGG" id="cgr:2888702"/>
<dbReference type="CGD" id="CAL0131474">
    <property type="gene designation" value="CAGL0H05709g"/>
</dbReference>
<dbReference type="VEuPathDB" id="FungiDB:B1J91_H05709g"/>
<dbReference type="VEuPathDB" id="FungiDB:CAGL0H05709g"/>
<dbReference type="eggNOG" id="KOG1490">
    <property type="taxonomic scope" value="Eukaryota"/>
</dbReference>
<dbReference type="HOGENOM" id="CLU_011784_4_1_1"/>
<dbReference type="InParanoid" id="Q6FRV0"/>
<dbReference type="OMA" id="EWKNDVM"/>
<dbReference type="Proteomes" id="UP000002428">
    <property type="component" value="Chromosome H"/>
</dbReference>
<dbReference type="GO" id="GO:0005737">
    <property type="term" value="C:cytoplasm"/>
    <property type="evidence" value="ECO:0007669"/>
    <property type="project" value="EnsemblFungi"/>
</dbReference>
<dbReference type="GO" id="GO:0005730">
    <property type="term" value="C:nucleolus"/>
    <property type="evidence" value="ECO:0007669"/>
    <property type="project" value="UniProtKB-SubCell"/>
</dbReference>
<dbReference type="GO" id="GO:0030687">
    <property type="term" value="C:preribosome, large subunit precursor"/>
    <property type="evidence" value="ECO:0007669"/>
    <property type="project" value="EnsemblFungi"/>
</dbReference>
<dbReference type="GO" id="GO:0005525">
    <property type="term" value="F:GTP binding"/>
    <property type="evidence" value="ECO:0007669"/>
    <property type="project" value="UniProtKB-KW"/>
</dbReference>
<dbReference type="GO" id="GO:1902626">
    <property type="term" value="P:assembly of large subunit precursor of preribosome"/>
    <property type="evidence" value="ECO:0007669"/>
    <property type="project" value="EnsemblFungi"/>
</dbReference>
<dbReference type="GO" id="GO:0000054">
    <property type="term" value="P:ribosomal subunit export from nucleus"/>
    <property type="evidence" value="ECO:0007669"/>
    <property type="project" value="EnsemblFungi"/>
</dbReference>
<dbReference type="GO" id="GO:0006364">
    <property type="term" value="P:rRNA processing"/>
    <property type="evidence" value="ECO:0007669"/>
    <property type="project" value="EnsemblFungi"/>
</dbReference>
<dbReference type="CDD" id="cd01897">
    <property type="entry name" value="NOG"/>
    <property type="match status" value="1"/>
</dbReference>
<dbReference type="FunFam" id="1.20.120.1190:FF:000001">
    <property type="entry name" value="Nucleolar GTP-binding protein 1"/>
    <property type="match status" value="1"/>
</dbReference>
<dbReference type="FunFam" id="3.40.50.300:FF:000496">
    <property type="entry name" value="Nucleolar GTP-binding protein 1"/>
    <property type="match status" value="1"/>
</dbReference>
<dbReference type="Gene3D" id="1.20.120.1190">
    <property type="match status" value="1"/>
</dbReference>
<dbReference type="Gene3D" id="3.40.50.300">
    <property type="entry name" value="P-loop containing nucleotide triphosphate hydrolases"/>
    <property type="match status" value="1"/>
</dbReference>
<dbReference type="InterPro" id="IPR031167">
    <property type="entry name" value="G_OBG"/>
</dbReference>
<dbReference type="InterPro" id="IPR006073">
    <property type="entry name" value="GTP-bd"/>
</dbReference>
<dbReference type="InterPro" id="IPR024926">
    <property type="entry name" value="NOG1"/>
</dbReference>
<dbReference type="InterPro" id="IPR041623">
    <property type="entry name" value="NOG1_N"/>
</dbReference>
<dbReference type="InterPro" id="IPR010674">
    <property type="entry name" value="NOG1_Rossman_fold_dom"/>
</dbReference>
<dbReference type="InterPro" id="IPR012973">
    <property type="entry name" value="NOG_C"/>
</dbReference>
<dbReference type="InterPro" id="IPR027417">
    <property type="entry name" value="P-loop_NTPase"/>
</dbReference>
<dbReference type="PANTHER" id="PTHR45759">
    <property type="entry name" value="NUCLEOLAR GTP-BINDING PROTEIN 1"/>
    <property type="match status" value="1"/>
</dbReference>
<dbReference type="Pfam" id="PF06858">
    <property type="entry name" value="NOG1"/>
    <property type="match status" value="1"/>
</dbReference>
<dbReference type="Pfam" id="PF17835">
    <property type="entry name" value="NOG1_N"/>
    <property type="match status" value="1"/>
</dbReference>
<dbReference type="Pfam" id="PF08155">
    <property type="entry name" value="NOGCT"/>
    <property type="match status" value="1"/>
</dbReference>
<dbReference type="PIRSF" id="PIRSF038919">
    <property type="entry name" value="NOG1"/>
    <property type="match status" value="1"/>
</dbReference>
<dbReference type="PRINTS" id="PR00326">
    <property type="entry name" value="GTP1OBG"/>
</dbReference>
<dbReference type="SUPFAM" id="SSF52540">
    <property type="entry name" value="P-loop containing nucleoside triphosphate hydrolases"/>
    <property type="match status" value="1"/>
</dbReference>
<dbReference type="PROSITE" id="PS51710">
    <property type="entry name" value="G_OBG"/>
    <property type="match status" value="1"/>
</dbReference>
<evidence type="ECO:0000250" key="1"/>
<evidence type="ECO:0000255" key="2">
    <source>
        <dbReference type="PROSITE-ProRule" id="PRU01047"/>
    </source>
</evidence>
<evidence type="ECO:0000256" key="3">
    <source>
        <dbReference type="SAM" id="MobiDB-lite"/>
    </source>
</evidence>
<gene>
    <name type="primary">NOG1</name>
    <name type="ordered locus">CAGL0H05709g</name>
</gene>
<sequence length="645" mass="74087">MQLSWKDIPTVAPANDMLDIVLNRTQRKTPTVIRPGFKITRIRAFYMRKVKFTAEGFEEKFDDILKGFPNINDVHPFHRDLMDTLYEKNHYKISLAAVSRAKTLVEQVSRDYTRLLKFGQSLFQCKQLKRAALGRMATIVKKLKDPLVYLEQVRQHLGRLPSIDPNTRTLLICGYPNVGKSSFLRCITKSDVEVQPYAFTTKSLYVGHFDYKYLRFQAIDTPGILDRPTEEMNNIEMQSIYAIAHLRSCVMYFMDLSEQCGFSVEAQVKLFHSIKPLFANKSVMVVINKTDIIRPEDLDEERAKLLQTVTELPGVEIMSASCQLEDNVMNVRNKACEKLLASRIENKLKSQARITNVLNKIHVAKPQARDDVERTPYIPEEFKKLKKYDPEDPERRLLARDIEAENGGAGVFNINLKDKYILDDDEWKNDIMPEIMDGKNVYDFLDPDIAAKLQALEEEEERLEKEGFYDSDEDESYGGFDQEEIDEIREKADWIRNKQKKMIAEARNKKSLRNKAMMPRSKLVKSFGDMEKHMATLGHDMSSLQDKHRAAAEKSRYVETGADVVFGQNDSMASGSNGGKLRQSDRLLDGVADGSMRSKADRMAKLQRRQRNRDARQGEADRHATASLPKHLFSGKRGIGKSDFR</sequence>
<protein>
    <recommendedName>
        <fullName>Nucleolar GTP-binding protein 1</fullName>
    </recommendedName>
</protein>
<proteinExistence type="inferred from homology"/>
<name>NOG1_CANGA</name>
<feature type="chain" id="PRO_0000195031" description="Nucleolar GTP-binding protein 1">
    <location>
        <begin position="1"/>
        <end position="645"/>
    </location>
</feature>
<feature type="domain" description="OBG-type G" evidence="2">
    <location>
        <begin position="168"/>
        <end position="340"/>
    </location>
</feature>
<feature type="region of interest" description="Disordered" evidence="3">
    <location>
        <begin position="567"/>
        <end position="645"/>
    </location>
</feature>
<feature type="compositionally biased region" description="Basic and acidic residues" evidence="3">
    <location>
        <begin position="612"/>
        <end position="624"/>
    </location>
</feature>
<feature type="binding site" evidence="2">
    <location>
        <begin position="174"/>
        <end position="181"/>
    </location>
    <ligand>
        <name>GTP</name>
        <dbReference type="ChEBI" id="CHEBI:37565"/>
    </ligand>
</feature>
<feature type="binding site" evidence="2">
    <location>
        <begin position="220"/>
        <end position="224"/>
    </location>
    <ligand>
        <name>GTP</name>
        <dbReference type="ChEBI" id="CHEBI:37565"/>
    </ligand>
</feature>
<feature type="binding site" evidence="2">
    <location>
        <begin position="288"/>
        <end position="291"/>
    </location>
    <ligand>
        <name>GTP</name>
        <dbReference type="ChEBI" id="CHEBI:37565"/>
    </ligand>
</feature>
<comment type="function">
    <text evidence="1">Involved in the biogenesis of the 60S ribosomal subunit.</text>
</comment>
<comment type="subcellular location">
    <subcellularLocation>
        <location evidence="1">Nucleus</location>
        <location evidence="1">Nucleolus</location>
    </subcellularLocation>
</comment>
<comment type="similarity">
    <text evidence="2">Belongs to the TRAFAC class OBG-HflX-like GTPase superfamily. OBG GTPase family. NOG subfamily.</text>
</comment>
<organism>
    <name type="scientific">Candida glabrata (strain ATCC 2001 / BCRC 20586 / JCM 3761 / NBRC 0622 / NRRL Y-65 / CBS 138)</name>
    <name type="common">Yeast</name>
    <name type="synonym">Nakaseomyces glabratus</name>
    <dbReference type="NCBI Taxonomy" id="284593"/>
    <lineage>
        <taxon>Eukaryota</taxon>
        <taxon>Fungi</taxon>
        <taxon>Dikarya</taxon>
        <taxon>Ascomycota</taxon>
        <taxon>Saccharomycotina</taxon>
        <taxon>Saccharomycetes</taxon>
        <taxon>Saccharomycetales</taxon>
        <taxon>Saccharomycetaceae</taxon>
        <taxon>Nakaseomyces</taxon>
    </lineage>
</organism>
<reference key="1">
    <citation type="journal article" date="2004" name="Nature">
        <title>Genome evolution in yeasts.</title>
        <authorList>
            <person name="Dujon B."/>
            <person name="Sherman D."/>
            <person name="Fischer G."/>
            <person name="Durrens P."/>
            <person name="Casaregola S."/>
            <person name="Lafontaine I."/>
            <person name="de Montigny J."/>
            <person name="Marck C."/>
            <person name="Neuveglise C."/>
            <person name="Talla E."/>
            <person name="Goffard N."/>
            <person name="Frangeul L."/>
            <person name="Aigle M."/>
            <person name="Anthouard V."/>
            <person name="Babour A."/>
            <person name="Barbe V."/>
            <person name="Barnay S."/>
            <person name="Blanchin S."/>
            <person name="Beckerich J.-M."/>
            <person name="Beyne E."/>
            <person name="Bleykasten C."/>
            <person name="Boisrame A."/>
            <person name="Boyer J."/>
            <person name="Cattolico L."/>
            <person name="Confanioleri F."/>
            <person name="de Daruvar A."/>
            <person name="Despons L."/>
            <person name="Fabre E."/>
            <person name="Fairhead C."/>
            <person name="Ferry-Dumazet H."/>
            <person name="Groppi A."/>
            <person name="Hantraye F."/>
            <person name="Hennequin C."/>
            <person name="Jauniaux N."/>
            <person name="Joyet P."/>
            <person name="Kachouri R."/>
            <person name="Kerrest A."/>
            <person name="Koszul R."/>
            <person name="Lemaire M."/>
            <person name="Lesur I."/>
            <person name="Ma L."/>
            <person name="Muller H."/>
            <person name="Nicaud J.-M."/>
            <person name="Nikolski M."/>
            <person name="Oztas S."/>
            <person name="Ozier-Kalogeropoulos O."/>
            <person name="Pellenz S."/>
            <person name="Potier S."/>
            <person name="Richard G.-F."/>
            <person name="Straub M.-L."/>
            <person name="Suleau A."/>
            <person name="Swennen D."/>
            <person name="Tekaia F."/>
            <person name="Wesolowski-Louvel M."/>
            <person name="Westhof E."/>
            <person name="Wirth B."/>
            <person name="Zeniou-Meyer M."/>
            <person name="Zivanovic Y."/>
            <person name="Bolotin-Fukuhara M."/>
            <person name="Thierry A."/>
            <person name="Bouchier C."/>
            <person name="Caudron B."/>
            <person name="Scarpelli C."/>
            <person name="Gaillardin C."/>
            <person name="Weissenbach J."/>
            <person name="Wincker P."/>
            <person name="Souciet J.-L."/>
        </authorList>
    </citation>
    <scope>NUCLEOTIDE SEQUENCE [LARGE SCALE GENOMIC DNA]</scope>
    <source>
        <strain>ATCC 2001 / BCRC 20586 / JCM 3761 / NBRC 0622 / NRRL Y-65 / CBS 138</strain>
    </source>
</reference>
<accession>Q6FRV0</accession>
<keyword id="KW-0342">GTP-binding</keyword>
<keyword id="KW-0547">Nucleotide-binding</keyword>
<keyword id="KW-0539">Nucleus</keyword>
<keyword id="KW-1185">Reference proteome</keyword>
<keyword id="KW-0690">Ribosome biogenesis</keyword>